<reference key="1">
    <citation type="journal article" date="1999" name="DNA Res.">
        <title>Structural analysis of Arabidopsis thaliana chromosome 5. IX. Sequence features of the regions of 1,011,550 bp covered by seventeen P1 and TAC clones.</title>
        <authorList>
            <person name="Kaneko T."/>
            <person name="Katoh T."/>
            <person name="Sato S."/>
            <person name="Nakamura Y."/>
            <person name="Asamizu E."/>
            <person name="Kotani H."/>
            <person name="Miyajima N."/>
            <person name="Tabata S."/>
        </authorList>
    </citation>
    <scope>NUCLEOTIDE SEQUENCE [LARGE SCALE GENOMIC DNA]</scope>
    <source>
        <strain>cv. Columbia</strain>
    </source>
</reference>
<reference key="2">
    <citation type="journal article" date="2017" name="Plant J.">
        <title>Araport11: a complete reannotation of the Arabidopsis thaliana reference genome.</title>
        <authorList>
            <person name="Cheng C.Y."/>
            <person name="Krishnakumar V."/>
            <person name="Chan A.P."/>
            <person name="Thibaud-Nissen F."/>
            <person name="Schobel S."/>
            <person name="Town C.D."/>
        </authorList>
    </citation>
    <scope>GENOME REANNOTATION</scope>
    <source>
        <strain>cv. Columbia</strain>
    </source>
</reference>
<reference key="3">
    <citation type="journal article" date="2008" name="Proc. Natl. Acad. Sci. U.S.A.">
        <title>Arabidopsis TAO1 is a TIR-NB-LRR protein that contributes to disease resistance induced by the Pseudomonas syringae effector AvrB.</title>
        <authorList>
            <person name="Eitas T.K."/>
            <person name="Nimchuk Z.L."/>
            <person name="Dangl J.L."/>
        </authorList>
    </citation>
    <scope>FUNCTION</scope>
    <source>
        <strain>cv. Mt-0</strain>
    </source>
</reference>
<dbReference type="EC" id="3.2.2.6" evidence="2"/>
<dbReference type="EMBL" id="AB017065">
    <property type="protein sequence ID" value="BAB09158.1"/>
    <property type="molecule type" value="Genomic_DNA"/>
</dbReference>
<dbReference type="EMBL" id="CP002688">
    <property type="protein sequence ID" value="AED95118.1"/>
    <property type="molecule type" value="Genomic_DNA"/>
</dbReference>
<dbReference type="RefSeq" id="NP_199264.1">
    <property type="nucleotide sequence ID" value="NM_123818.2"/>
</dbReference>
<dbReference type="SMR" id="Q9FI14"/>
<dbReference type="FunCoup" id="Q9FI14">
    <property type="interactions" value="7"/>
</dbReference>
<dbReference type="STRING" id="3702.Q9FI14"/>
<dbReference type="iPTMnet" id="Q9FI14"/>
<dbReference type="PaxDb" id="3702-AT5G44510.1"/>
<dbReference type="ProteomicsDB" id="234124"/>
<dbReference type="EnsemblPlants" id="AT5G44510.1">
    <property type="protein sequence ID" value="AT5G44510.1"/>
    <property type="gene ID" value="AT5G44510"/>
</dbReference>
<dbReference type="GeneID" id="834478"/>
<dbReference type="Gramene" id="AT5G44510.1">
    <property type="protein sequence ID" value="AT5G44510.1"/>
    <property type="gene ID" value="AT5G44510"/>
</dbReference>
<dbReference type="KEGG" id="ath:AT5G44510"/>
<dbReference type="Araport" id="AT5G44510"/>
<dbReference type="TAIR" id="AT5G44510">
    <property type="gene designation" value="TAO1"/>
</dbReference>
<dbReference type="eggNOG" id="ENOG502QWPX">
    <property type="taxonomic scope" value="Eukaryota"/>
</dbReference>
<dbReference type="HOGENOM" id="CLU_001561_0_1_1"/>
<dbReference type="InParanoid" id="Q9FI14"/>
<dbReference type="PhylomeDB" id="Q9FI14"/>
<dbReference type="PRO" id="PR:Q9FI14"/>
<dbReference type="Proteomes" id="UP000006548">
    <property type="component" value="Chromosome 5"/>
</dbReference>
<dbReference type="ExpressionAtlas" id="Q9FI14">
    <property type="expression patterns" value="baseline and differential"/>
</dbReference>
<dbReference type="GO" id="GO:0043531">
    <property type="term" value="F:ADP binding"/>
    <property type="evidence" value="ECO:0007669"/>
    <property type="project" value="InterPro"/>
</dbReference>
<dbReference type="GO" id="GO:0005524">
    <property type="term" value="F:ATP binding"/>
    <property type="evidence" value="ECO:0007669"/>
    <property type="project" value="UniProtKB-KW"/>
</dbReference>
<dbReference type="GO" id="GO:0061809">
    <property type="term" value="F:NAD+ nucleosidase activity, cyclic ADP-ribose generating"/>
    <property type="evidence" value="ECO:0007669"/>
    <property type="project" value="UniProtKB-EC"/>
</dbReference>
<dbReference type="GO" id="GO:0042742">
    <property type="term" value="P:defense response to bacterium"/>
    <property type="evidence" value="ECO:0000315"/>
    <property type="project" value="UniProtKB"/>
</dbReference>
<dbReference type="GO" id="GO:0007165">
    <property type="term" value="P:signal transduction"/>
    <property type="evidence" value="ECO:0007669"/>
    <property type="project" value="InterPro"/>
</dbReference>
<dbReference type="FunFam" id="1.10.8.430:FF:000002">
    <property type="entry name" value="Disease resistance protein (TIR-NBS-LRR class)"/>
    <property type="match status" value="1"/>
</dbReference>
<dbReference type="FunFam" id="3.40.50.10140:FF:000007">
    <property type="entry name" value="Disease resistance protein (TIR-NBS-LRR class)"/>
    <property type="match status" value="1"/>
</dbReference>
<dbReference type="FunFam" id="3.40.50.300:FF:001002">
    <property type="entry name" value="Disease resistance protein (TIR-NBS-LRR class)"/>
    <property type="match status" value="1"/>
</dbReference>
<dbReference type="FunFam" id="3.80.10.10:FF:000701">
    <property type="entry name" value="Disease resistance protein (TIR-NBS-LRR class)"/>
    <property type="match status" value="1"/>
</dbReference>
<dbReference type="FunFam" id="3.80.10.10:FF:001069">
    <property type="entry name" value="Disease resistance protein (TIR-NBS-LRR class)"/>
    <property type="match status" value="1"/>
</dbReference>
<dbReference type="Gene3D" id="1.10.8.430">
    <property type="entry name" value="Helical domain of apoptotic protease-activating factors"/>
    <property type="match status" value="1"/>
</dbReference>
<dbReference type="Gene3D" id="3.40.50.300">
    <property type="entry name" value="P-loop containing nucleotide triphosphate hydrolases"/>
    <property type="match status" value="1"/>
</dbReference>
<dbReference type="Gene3D" id="3.80.10.10">
    <property type="entry name" value="Ribonuclease Inhibitor"/>
    <property type="match status" value="3"/>
</dbReference>
<dbReference type="Gene3D" id="3.40.50.10140">
    <property type="entry name" value="Toll/interleukin-1 receptor homology (TIR) domain"/>
    <property type="match status" value="1"/>
</dbReference>
<dbReference type="InterPro" id="IPR042197">
    <property type="entry name" value="Apaf_helical"/>
</dbReference>
<dbReference type="InterPro" id="IPR045344">
    <property type="entry name" value="C-JID"/>
</dbReference>
<dbReference type="InterPro" id="IPR044974">
    <property type="entry name" value="Disease_R_plants"/>
</dbReference>
<dbReference type="InterPro" id="IPR011713">
    <property type="entry name" value="Leu-rich_rpt_3"/>
</dbReference>
<dbReference type="InterPro" id="IPR032675">
    <property type="entry name" value="LRR_dom_sf"/>
</dbReference>
<dbReference type="InterPro" id="IPR002182">
    <property type="entry name" value="NB-ARC"/>
</dbReference>
<dbReference type="InterPro" id="IPR027417">
    <property type="entry name" value="P-loop_NTPase"/>
</dbReference>
<dbReference type="InterPro" id="IPR000157">
    <property type="entry name" value="TIR_dom"/>
</dbReference>
<dbReference type="InterPro" id="IPR035897">
    <property type="entry name" value="Toll_tir_struct_dom_sf"/>
</dbReference>
<dbReference type="InterPro" id="IPR036390">
    <property type="entry name" value="WH_DNA-bd_sf"/>
</dbReference>
<dbReference type="PANTHER" id="PTHR11017:SF333">
    <property type="entry name" value="ADP-RIBOSYL CYCLASE_CYCLIC ADP-RIBOSE HYDROLASE-RELATED"/>
    <property type="match status" value="1"/>
</dbReference>
<dbReference type="PANTHER" id="PTHR11017">
    <property type="entry name" value="LEUCINE-RICH REPEAT-CONTAINING PROTEIN"/>
    <property type="match status" value="1"/>
</dbReference>
<dbReference type="Pfam" id="PF20160">
    <property type="entry name" value="C-JID"/>
    <property type="match status" value="1"/>
</dbReference>
<dbReference type="Pfam" id="PF07725">
    <property type="entry name" value="LRR_3"/>
    <property type="match status" value="1"/>
</dbReference>
<dbReference type="Pfam" id="PF00931">
    <property type="entry name" value="NB-ARC"/>
    <property type="match status" value="1"/>
</dbReference>
<dbReference type="Pfam" id="PF01582">
    <property type="entry name" value="TIR"/>
    <property type="match status" value="1"/>
</dbReference>
<dbReference type="Pfam" id="PF23282">
    <property type="entry name" value="WHD_ROQ1"/>
    <property type="match status" value="1"/>
</dbReference>
<dbReference type="PRINTS" id="PR00364">
    <property type="entry name" value="DISEASERSIST"/>
</dbReference>
<dbReference type="SMART" id="SM00255">
    <property type="entry name" value="TIR"/>
    <property type="match status" value="1"/>
</dbReference>
<dbReference type="SUPFAM" id="SSF52058">
    <property type="entry name" value="L domain-like"/>
    <property type="match status" value="1"/>
</dbReference>
<dbReference type="SUPFAM" id="SSF52540">
    <property type="entry name" value="P-loop containing nucleoside triphosphate hydrolases"/>
    <property type="match status" value="1"/>
</dbReference>
<dbReference type="SUPFAM" id="SSF52047">
    <property type="entry name" value="RNI-like"/>
    <property type="match status" value="1"/>
</dbReference>
<dbReference type="SUPFAM" id="SSF52200">
    <property type="entry name" value="Toll/Interleukin receptor TIR domain"/>
    <property type="match status" value="1"/>
</dbReference>
<dbReference type="SUPFAM" id="SSF46785">
    <property type="entry name" value="Winged helix' DNA-binding domain"/>
    <property type="match status" value="1"/>
</dbReference>
<dbReference type="PROSITE" id="PS50104">
    <property type="entry name" value="TIR"/>
    <property type="match status" value="1"/>
</dbReference>
<sequence length="1187" mass="134222">MDSSCFLVYRIFRFRKRNKNISSSLSSSSPPSSLSQNWLHPVFLSFRGEDVRKGLLSHIQKEFQRNGITPFIDNEMKRGGSIGPELLQAIRGSKIAIILLSRNYGSSKWCLDELVEIMKCREELGQTVMTVFYDVDPSDVRKQKGDFGKVFKKTCVGRPEEMVQRWKQALTSAANILGEDSRNWENEADMIIKISKDVSDVLSFTPSKDFDEFVGIEAHTTEITSLLQLDLEEVRMIGIWGPAGIGKTTISRVLYNKLFHQFQLGAIIDNIKVRYPRPCHDEYSAKLQLQKELLSQMINQKDMVVPHLGVAQERLKDKKVLLVLDDVDGLVQLDAMAKDVQWFGLGSRIIVVTQDLKLLKAHGIKYIYKVDFPTSDEALEIFCMYAFGEKSPKVGFEQIARTVTTLAGKLPLGLRVMGSYLRRMSKQEWAKSIPRLRTSLDDDIESVLKFSYNSLAEQEKDLFLHITCFFRRERIETLEVFLAKKSVDMRQGLQILADKSLLSLNLGNIEMHNLLVQLGLDIVRKQSIHKPGKRQFLVDTEDICEVLTDDTGTRTLIGIDLELSGVIEGVINISERAFERMCNLQFLRFHHPYGDRCHDILYLPQGLSHISRKLRLLHWERYPLTCLPPKFNPEFLVKINMRDSMLEKLWDGNEPIRNLKWMDLSFCVNLKELPDFSTATNLQELRLINCLSLVELPSSIGNATNLLELDLIDCSSLVKLPSSIGNLTNLKKLFLNRCSSLVKLPSSFGNVTSLKELNLSGCSSLLEIPSSIGNIVNLKKVYADGCSSLVQLPSSIGNNTNLKELHLLNCSSLMECPSSMLNLTRLEDLNLSGCLSLVKLPSIGNVINLQSLYLSDCSSLMELPFTIENATNLDTLYLDGCSNLLELPSSIWNITNLQSLYLNGCSSLKELPSLVENAINLQSLSLMKCSSLVELPSSIWRISNLSYLDVSNCSSLLELNLVSHPVVPDSLILDAGDCESLVQRLDCFFQNPKIVLNFANCFKLNQEARDLIIQTSACRNAILPGEKVPAYFTYRATGDSLTVKLNQKYLLQSLRFKACLLLVEGQNKWPNWGMNLVTSREPDGHIVLYTPSSHLQGPLLMENLYTFEFELVVTSSEFVLEFRADRYKCALGRFDKFGVHVVWCHLDQYESKSPSCKPFWRDFPIVISNGQNILDAILKTPMPSINQ</sequence>
<comment type="function">
    <text evidence="3">TIR-NB-LRR receptor-like protein that contributes to disease resistance induced by the Pseudomonas syringae type III effector AvrB. Acts additively with RPM1 to generate a full disease resistance response to P.syringae expressing this type III effector.</text>
</comment>
<comment type="catalytic activity">
    <reaction evidence="2">
        <text>NAD(+) + H2O = ADP-D-ribose + nicotinamide + H(+)</text>
        <dbReference type="Rhea" id="RHEA:16301"/>
        <dbReference type="ChEBI" id="CHEBI:15377"/>
        <dbReference type="ChEBI" id="CHEBI:15378"/>
        <dbReference type="ChEBI" id="CHEBI:17154"/>
        <dbReference type="ChEBI" id="CHEBI:57540"/>
        <dbReference type="ChEBI" id="CHEBI:57967"/>
        <dbReference type="EC" id="3.2.2.6"/>
    </reaction>
    <physiologicalReaction direction="left-to-right" evidence="2">
        <dbReference type="Rhea" id="RHEA:16302"/>
    </physiologicalReaction>
</comment>
<comment type="domain">
    <text evidence="2">The TIR domain mediates NAD(+) hydrolase (NADase) activity. Self-association of TIR domains is required for NADase activity.</text>
</comment>
<proteinExistence type="inferred from homology"/>
<protein>
    <recommendedName>
        <fullName evidence="5">Disease resistance protein TAO1</fullName>
        <ecNumber evidence="2">3.2.2.6</ecNumber>
    </recommendedName>
    <alternativeName>
        <fullName evidence="4">Protein TARGET OF AVRB OPERATION 1</fullName>
    </alternativeName>
</protein>
<name>TAO1_ARATH</name>
<gene>
    <name evidence="4" type="primary">TAO1</name>
    <name evidence="6" type="ordered locus">At5g44510</name>
    <name evidence="7" type="ORF">MFC16.19</name>
</gene>
<organism>
    <name type="scientific">Arabidopsis thaliana</name>
    <name type="common">Mouse-ear cress</name>
    <dbReference type="NCBI Taxonomy" id="3702"/>
    <lineage>
        <taxon>Eukaryota</taxon>
        <taxon>Viridiplantae</taxon>
        <taxon>Streptophyta</taxon>
        <taxon>Embryophyta</taxon>
        <taxon>Tracheophyta</taxon>
        <taxon>Spermatophyta</taxon>
        <taxon>Magnoliopsida</taxon>
        <taxon>eudicotyledons</taxon>
        <taxon>Gunneridae</taxon>
        <taxon>Pentapetalae</taxon>
        <taxon>rosids</taxon>
        <taxon>malvids</taxon>
        <taxon>Brassicales</taxon>
        <taxon>Brassicaceae</taxon>
        <taxon>Camelineae</taxon>
        <taxon>Arabidopsis</taxon>
    </lineage>
</organism>
<feature type="chain" id="PRO_0000433377" description="Disease resistance protein TAO1">
    <location>
        <begin position="1"/>
        <end position="1187"/>
    </location>
</feature>
<feature type="domain" description="TIR" evidence="2">
    <location>
        <begin position="38"/>
        <end position="202"/>
    </location>
</feature>
<feature type="domain" description="NB-ARC" evidence="1">
    <location>
        <begin position="217"/>
        <end position="478"/>
    </location>
</feature>
<feature type="repeat" description="LRR 1" evidence="1">
    <location>
        <begin position="498"/>
        <end position="522"/>
    </location>
</feature>
<feature type="repeat" description="LRR 2" evidence="1">
    <location>
        <begin position="611"/>
        <end position="633"/>
    </location>
</feature>
<feature type="repeat" description="LRR 3" evidence="1">
    <location>
        <begin position="635"/>
        <end position="658"/>
    </location>
</feature>
<feature type="repeat" description="LRR 4" evidence="1">
    <location>
        <begin position="660"/>
        <end position="679"/>
    </location>
</feature>
<feature type="repeat" description="LRR 5" evidence="1">
    <location>
        <begin position="680"/>
        <end position="703"/>
    </location>
</feature>
<feature type="repeat" description="LRR 6" evidence="1">
    <location>
        <begin position="704"/>
        <end position="727"/>
    </location>
</feature>
<feature type="repeat" description="LRR 7" evidence="1">
    <location>
        <begin position="728"/>
        <end position="750"/>
    </location>
</feature>
<feature type="repeat" description="LRR 8" evidence="1">
    <location>
        <begin position="752"/>
        <end position="775"/>
    </location>
</feature>
<feature type="repeat" description="LRR 9" evidence="1">
    <location>
        <begin position="799"/>
        <end position="823"/>
    </location>
</feature>
<feature type="repeat" description="LRR 10" evidence="1">
    <location>
        <begin position="824"/>
        <end position="849"/>
    </location>
</feature>
<feature type="repeat" description="LRR 11" evidence="1">
    <location>
        <begin position="870"/>
        <end position="894"/>
    </location>
</feature>
<feature type="repeat" description="LRR 12" evidence="1">
    <location>
        <begin position="895"/>
        <end position="918"/>
    </location>
</feature>
<feature type="repeat" description="LRR 13" evidence="1">
    <location>
        <begin position="920"/>
        <end position="942"/>
    </location>
</feature>
<feature type="repeat" description="LRR 14" evidence="1">
    <location>
        <begin position="953"/>
        <end position="974"/>
    </location>
</feature>
<feature type="active site" evidence="2">
    <location>
        <position position="113"/>
    </location>
</feature>
<keyword id="KW-0067">ATP-binding</keyword>
<keyword id="KW-0378">Hydrolase</keyword>
<keyword id="KW-0433">Leucine-rich repeat</keyword>
<keyword id="KW-0520">NAD</keyword>
<keyword id="KW-0547">Nucleotide-binding</keyword>
<keyword id="KW-0611">Plant defense</keyword>
<keyword id="KW-1185">Reference proteome</keyword>
<keyword id="KW-0677">Repeat</keyword>
<evidence type="ECO:0000255" key="1"/>
<evidence type="ECO:0000255" key="2">
    <source>
        <dbReference type="PROSITE-ProRule" id="PRU00204"/>
    </source>
</evidence>
<evidence type="ECO:0000269" key="3">
    <source>
    </source>
</evidence>
<evidence type="ECO:0000303" key="4">
    <source>
    </source>
</evidence>
<evidence type="ECO:0000305" key="5"/>
<evidence type="ECO:0000312" key="6">
    <source>
        <dbReference type="Araport" id="AT5G44510"/>
    </source>
</evidence>
<evidence type="ECO:0000312" key="7">
    <source>
        <dbReference type="EMBL" id="BAB09158.1"/>
    </source>
</evidence>
<accession>Q9FI14</accession>